<accession>D9Q2C4</accession>
<keyword id="KW-0067">ATP-binding</keyword>
<keyword id="KW-0963">Cytoplasm</keyword>
<keyword id="KW-0436">Ligase</keyword>
<keyword id="KW-0547">Nucleotide-binding</keyword>
<keyword id="KW-1185">Reference proteome</keyword>
<keyword id="KW-0819">tRNA processing</keyword>
<reference key="1">
    <citation type="journal article" date="2010" name="Appl. Environ. Microbiol.">
        <title>The genome sequence of the crenarchaeon Acidilobus saccharovorans supports a new order, Acidilobales, and suggests an important ecological role in terrestrial acidic hot springs.</title>
        <authorList>
            <person name="Mardanov A.V."/>
            <person name="Svetlitchnyi V.A."/>
            <person name="Beletsky A.V."/>
            <person name="Prokofeva M.I."/>
            <person name="Bonch-Osmolovskaya E.A."/>
            <person name="Ravin N.V."/>
            <person name="Skryabin K.G."/>
        </authorList>
    </citation>
    <scope>NUCLEOTIDE SEQUENCE [LARGE SCALE GENOMIC DNA]</scope>
    <source>
        <strain>DSM 16705 / JCM 18335 / VKM B-2471 / 345-15</strain>
    </source>
</reference>
<gene>
    <name evidence="1" type="primary">tiaS</name>
    <name type="ordered locus">ASAC_1057</name>
</gene>
<sequence>MEHQLLSVAIDDTDSQYGGCTTHLTGLILKELGNRALLADYPLLVRLNPNIPWRTRGNAATVLRLLYDGDPKELMETLWSIIEEYTEPRPPLPGKSPGLVVAPGSPWESERLRWLYRKALSDVVTLDVATESLSKYGALWRGGRGVIGAASSLAALSPGEPYTFELTFYRRPENWGSRRCVYSDKVAYLEGQSSGTLNNLELDEGTTSAAPGGPDPVLAGFRGTDPGELWRFDEALCERPHFAVLYRSNQHTGVHLQAQEPRIYRSVNITVTVRSPPLKLPGGHVIVEVSDGVNTYDAAFYEDSGPLARAAELLYPGDVIIIAGGVRPYSPRGKLTISVEAMKVVGVAQRRVQVPPRCPRCGARMESLGRGKGYRCPRCGLRSSGHKQSLVVERELLPGSYYYKIGRARHLSPVGARLPTMDRLPVTINVSDVLRVY</sequence>
<feature type="chain" id="PRO_0000407287" description="tRNA(Ile2) 2-agmatinylcytidine synthetase TiaS">
    <location>
        <begin position="1"/>
        <end position="437"/>
    </location>
</feature>
<name>TIAS_ACIS3</name>
<evidence type="ECO:0000255" key="1">
    <source>
        <dbReference type="HAMAP-Rule" id="MF_01892"/>
    </source>
</evidence>
<dbReference type="EC" id="6.3.4.22" evidence="1"/>
<dbReference type="EMBL" id="CP001742">
    <property type="protein sequence ID" value="ADL19462.1"/>
    <property type="molecule type" value="Genomic_DNA"/>
</dbReference>
<dbReference type="RefSeq" id="WP_013266974.1">
    <property type="nucleotide sequence ID" value="NC_014374.1"/>
</dbReference>
<dbReference type="SMR" id="D9Q2C4"/>
<dbReference type="STRING" id="666510.ASAC_1057"/>
<dbReference type="GeneID" id="9499303"/>
<dbReference type="KEGG" id="asc:ASAC_1057"/>
<dbReference type="eggNOG" id="arCOG01115">
    <property type="taxonomic scope" value="Archaea"/>
</dbReference>
<dbReference type="HOGENOM" id="CLU_675459_0_0_2"/>
<dbReference type="InParanoid" id="D9Q2C4"/>
<dbReference type="OrthoDB" id="39189at2157"/>
<dbReference type="Proteomes" id="UP000000346">
    <property type="component" value="Chromosome"/>
</dbReference>
<dbReference type="GO" id="GO:0005737">
    <property type="term" value="C:cytoplasm"/>
    <property type="evidence" value="ECO:0007669"/>
    <property type="project" value="UniProtKB-SubCell"/>
</dbReference>
<dbReference type="GO" id="GO:0005524">
    <property type="term" value="F:ATP binding"/>
    <property type="evidence" value="ECO:0007669"/>
    <property type="project" value="UniProtKB-KW"/>
</dbReference>
<dbReference type="GO" id="GO:0016879">
    <property type="term" value="F:ligase activity, forming carbon-nitrogen bonds"/>
    <property type="evidence" value="ECO:0007669"/>
    <property type="project" value="UniProtKB-UniRule"/>
</dbReference>
<dbReference type="GO" id="GO:0002101">
    <property type="term" value="P:tRNA wobble cytosine modification"/>
    <property type="evidence" value="ECO:0007669"/>
    <property type="project" value="UniProtKB-UniRule"/>
</dbReference>
<dbReference type="Gene3D" id="2.40.50.1010">
    <property type="match status" value="1"/>
</dbReference>
<dbReference type="Gene3D" id="3.30.70.2200">
    <property type="match status" value="1"/>
</dbReference>
<dbReference type="Gene3D" id="3.90.600.20">
    <property type="match status" value="1"/>
</dbReference>
<dbReference type="HAMAP" id="MF_01892">
    <property type="entry name" value="tRNA_Ile2_agm2C_synt"/>
    <property type="match status" value="1"/>
</dbReference>
<dbReference type="InterPro" id="IPR053870">
    <property type="entry name" value="TiaS-like_TCKD"/>
</dbReference>
<dbReference type="InterPro" id="IPR013696">
    <property type="entry name" value="TiaS_FLD"/>
</dbReference>
<dbReference type="InterPro" id="IPR024913">
    <property type="entry name" value="tRNA_Ile2__agm2C_synt"/>
</dbReference>
<dbReference type="InterPro" id="IPR055394">
    <property type="entry name" value="Zn_ribbon_TiaS"/>
</dbReference>
<dbReference type="PANTHER" id="PTHR40705:SF2">
    <property type="entry name" value="DUF1743 DOMAIN-CONTAINING PROTEIN"/>
    <property type="match status" value="1"/>
</dbReference>
<dbReference type="PANTHER" id="PTHR40705">
    <property type="entry name" value="TRNA(ILE2) 2-AGMATINYLCYTIDINE SYNTHETASE TIAS"/>
    <property type="match status" value="1"/>
</dbReference>
<dbReference type="Pfam" id="PF08489">
    <property type="entry name" value="TiaS_FLD"/>
    <property type="match status" value="1"/>
</dbReference>
<dbReference type="Pfam" id="PF22641">
    <property type="entry name" value="TiaS_TCKD"/>
    <property type="match status" value="1"/>
</dbReference>
<dbReference type="Pfam" id="PF23783">
    <property type="entry name" value="Zn_ribbon_TiaS"/>
    <property type="match status" value="1"/>
</dbReference>
<protein>
    <recommendedName>
        <fullName evidence="1">tRNA(Ile2) 2-agmatinylcytidine synthetase TiaS</fullName>
        <shortName evidence="1">tRNA(Ile2)-agm2C synthetase</shortName>
        <ecNumber evidence="1">6.3.4.22</ecNumber>
    </recommendedName>
    <alternativeName>
        <fullName evidence="1">tRNA(Ile2) agmatidine synthetase</fullName>
    </alternativeName>
</protein>
<comment type="function">
    <text evidence="1">ATP-dependent agmatine transferase that catalyzes the formation of 2-agmatinylcytidine (agm2C) at the wobble position (C34) of tRNA(Ile2), converting the codon specificity from AUG to AUA.</text>
</comment>
<comment type="catalytic activity">
    <reaction evidence="1">
        <text>cytidine(34) in tRNA(Ile2) + agmatine + ATP + H2O = 2-agmatinylcytidine(34) in tRNA(Ile2) + AMP + 2 phosphate + 2 H(+)</text>
        <dbReference type="Rhea" id="RHEA:43608"/>
        <dbReference type="Rhea" id="RHEA-COMP:10625"/>
        <dbReference type="Rhea" id="RHEA-COMP:10626"/>
        <dbReference type="ChEBI" id="CHEBI:15377"/>
        <dbReference type="ChEBI" id="CHEBI:15378"/>
        <dbReference type="ChEBI" id="CHEBI:30616"/>
        <dbReference type="ChEBI" id="CHEBI:43474"/>
        <dbReference type="ChEBI" id="CHEBI:58145"/>
        <dbReference type="ChEBI" id="CHEBI:82748"/>
        <dbReference type="ChEBI" id="CHEBI:83545"/>
        <dbReference type="ChEBI" id="CHEBI:456215"/>
        <dbReference type="EC" id="6.3.4.22"/>
    </reaction>
</comment>
<comment type="subcellular location">
    <subcellularLocation>
        <location evidence="1">Cytoplasm</location>
    </subcellularLocation>
</comment>
<comment type="similarity">
    <text evidence="1">Belongs to the TiaS family.</text>
</comment>
<organism>
    <name type="scientific">Acidilobus saccharovorans (strain DSM 16705 / JCM 18335 / VKM B-2471 / 345-15)</name>
    <dbReference type="NCBI Taxonomy" id="666510"/>
    <lineage>
        <taxon>Archaea</taxon>
        <taxon>Thermoproteota</taxon>
        <taxon>Thermoprotei</taxon>
        <taxon>Acidilobales</taxon>
        <taxon>Acidilobaceae</taxon>
        <taxon>Acidilobus</taxon>
    </lineage>
</organism>
<proteinExistence type="inferred from homology"/>